<proteinExistence type="inferred from homology"/>
<evidence type="ECO:0000255" key="1">
    <source>
        <dbReference type="HAMAP-Rule" id="MF_00501"/>
    </source>
</evidence>
<evidence type="ECO:0000305" key="2"/>
<gene>
    <name evidence="1" type="primary">rpmE</name>
    <name evidence="1" type="synonym">rpl31</name>
    <name type="ordered locus">HI_0758</name>
</gene>
<name>RL31_HAEIN</name>
<sequence length="70" mass="7833">MKQGIHPEYKEITATCSCGNVIKTRSTLGKDINLDVCGNCHPFYTGKQRVVDTGGRVERFNSRFKIPSTK</sequence>
<protein>
    <recommendedName>
        <fullName evidence="1">Large ribosomal subunit protein bL31</fullName>
    </recommendedName>
    <alternativeName>
        <fullName evidence="2">50S ribosomal protein L31</fullName>
    </alternativeName>
</protein>
<reference key="1">
    <citation type="journal article" date="1995" name="Science">
        <title>Whole-genome random sequencing and assembly of Haemophilus influenzae Rd.</title>
        <authorList>
            <person name="Fleischmann R.D."/>
            <person name="Adams M.D."/>
            <person name="White O."/>
            <person name="Clayton R.A."/>
            <person name="Kirkness E.F."/>
            <person name="Kerlavage A.R."/>
            <person name="Bult C.J."/>
            <person name="Tomb J.-F."/>
            <person name="Dougherty B.A."/>
            <person name="Merrick J.M."/>
            <person name="McKenney K."/>
            <person name="Sutton G.G."/>
            <person name="FitzHugh W."/>
            <person name="Fields C.A."/>
            <person name="Gocayne J.D."/>
            <person name="Scott J.D."/>
            <person name="Shirley R."/>
            <person name="Liu L.-I."/>
            <person name="Glodek A."/>
            <person name="Kelley J.M."/>
            <person name="Weidman J.F."/>
            <person name="Phillips C.A."/>
            <person name="Spriggs T."/>
            <person name="Hedblom E."/>
            <person name="Cotton M.D."/>
            <person name="Utterback T.R."/>
            <person name="Hanna M.C."/>
            <person name="Nguyen D.T."/>
            <person name="Saudek D.M."/>
            <person name="Brandon R.C."/>
            <person name="Fine L.D."/>
            <person name="Fritchman J.L."/>
            <person name="Fuhrmann J.L."/>
            <person name="Geoghagen N.S.M."/>
            <person name="Gnehm C.L."/>
            <person name="McDonald L.A."/>
            <person name="Small K.V."/>
            <person name="Fraser C.M."/>
            <person name="Smith H.O."/>
            <person name="Venter J.C."/>
        </authorList>
    </citation>
    <scope>NUCLEOTIDE SEQUENCE [LARGE SCALE GENOMIC DNA]</scope>
    <source>
        <strain>ATCC 51907 / DSM 11121 / KW20 / Rd</strain>
    </source>
</reference>
<organism>
    <name type="scientific">Haemophilus influenzae (strain ATCC 51907 / DSM 11121 / KW20 / Rd)</name>
    <dbReference type="NCBI Taxonomy" id="71421"/>
    <lineage>
        <taxon>Bacteria</taxon>
        <taxon>Pseudomonadati</taxon>
        <taxon>Pseudomonadota</taxon>
        <taxon>Gammaproteobacteria</taxon>
        <taxon>Pasteurellales</taxon>
        <taxon>Pasteurellaceae</taxon>
        <taxon>Haemophilus</taxon>
    </lineage>
</organism>
<accession>P44367</accession>
<keyword id="KW-0479">Metal-binding</keyword>
<keyword id="KW-1185">Reference proteome</keyword>
<keyword id="KW-0687">Ribonucleoprotein</keyword>
<keyword id="KW-0689">Ribosomal protein</keyword>
<keyword id="KW-0694">RNA-binding</keyword>
<keyword id="KW-0699">rRNA-binding</keyword>
<keyword id="KW-0862">Zinc</keyword>
<comment type="function">
    <text evidence="1">Binds the 23S rRNA.</text>
</comment>
<comment type="cofactor">
    <cofactor evidence="1">
        <name>Zn(2+)</name>
        <dbReference type="ChEBI" id="CHEBI:29105"/>
    </cofactor>
    <text evidence="1">Binds 1 zinc ion per subunit.</text>
</comment>
<comment type="subunit">
    <text evidence="1">Part of the 50S ribosomal subunit.</text>
</comment>
<comment type="similarity">
    <text evidence="1">Belongs to the bacterial ribosomal protein bL31 family. Type A subfamily.</text>
</comment>
<feature type="chain" id="PRO_0000173113" description="Large ribosomal subunit protein bL31">
    <location>
        <begin position="1"/>
        <end position="70"/>
    </location>
</feature>
<feature type="binding site" evidence="1">
    <location>
        <position position="16"/>
    </location>
    <ligand>
        <name>Zn(2+)</name>
        <dbReference type="ChEBI" id="CHEBI:29105"/>
    </ligand>
</feature>
<feature type="binding site" evidence="1">
    <location>
        <position position="18"/>
    </location>
    <ligand>
        <name>Zn(2+)</name>
        <dbReference type="ChEBI" id="CHEBI:29105"/>
    </ligand>
</feature>
<feature type="binding site" evidence="1">
    <location>
        <position position="37"/>
    </location>
    <ligand>
        <name>Zn(2+)</name>
        <dbReference type="ChEBI" id="CHEBI:29105"/>
    </ligand>
</feature>
<feature type="binding site" evidence="1">
    <location>
        <position position="40"/>
    </location>
    <ligand>
        <name>Zn(2+)</name>
        <dbReference type="ChEBI" id="CHEBI:29105"/>
    </ligand>
</feature>
<dbReference type="EMBL" id="L42023">
    <property type="protein sequence ID" value="AAC22417.1"/>
    <property type="molecule type" value="Genomic_DNA"/>
</dbReference>
<dbReference type="PIR" id="B64091">
    <property type="entry name" value="B64091"/>
</dbReference>
<dbReference type="RefSeq" id="NP_438917.1">
    <property type="nucleotide sequence ID" value="NC_000907.1"/>
</dbReference>
<dbReference type="SMR" id="P44367"/>
<dbReference type="STRING" id="71421.HI_0758"/>
<dbReference type="EnsemblBacteria" id="AAC22417">
    <property type="protein sequence ID" value="AAC22417"/>
    <property type="gene ID" value="HI_0758"/>
</dbReference>
<dbReference type="KEGG" id="hin:HI_0758"/>
<dbReference type="PATRIC" id="fig|71421.8.peg.796"/>
<dbReference type="eggNOG" id="COG0254">
    <property type="taxonomic scope" value="Bacteria"/>
</dbReference>
<dbReference type="HOGENOM" id="CLU_114306_4_3_6"/>
<dbReference type="OrthoDB" id="9803251at2"/>
<dbReference type="PhylomeDB" id="P44367"/>
<dbReference type="BioCyc" id="HINF71421:G1GJ1-796-MONOMER"/>
<dbReference type="Proteomes" id="UP000000579">
    <property type="component" value="Chromosome"/>
</dbReference>
<dbReference type="GO" id="GO:1990904">
    <property type="term" value="C:ribonucleoprotein complex"/>
    <property type="evidence" value="ECO:0007669"/>
    <property type="project" value="UniProtKB-KW"/>
</dbReference>
<dbReference type="GO" id="GO:0005840">
    <property type="term" value="C:ribosome"/>
    <property type="evidence" value="ECO:0007669"/>
    <property type="project" value="UniProtKB-KW"/>
</dbReference>
<dbReference type="GO" id="GO:0046872">
    <property type="term" value="F:metal ion binding"/>
    <property type="evidence" value="ECO:0007669"/>
    <property type="project" value="UniProtKB-KW"/>
</dbReference>
<dbReference type="GO" id="GO:0019843">
    <property type="term" value="F:rRNA binding"/>
    <property type="evidence" value="ECO:0007669"/>
    <property type="project" value="UniProtKB-KW"/>
</dbReference>
<dbReference type="GO" id="GO:0003735">
    <property type="term" value="F:structural constituent of ribosome"/>
    <property type="evidence" value="ECO:0007669"/>
    <property type="project" value="InterPro"/>
</dbReference>
<dbReference type="GO" id="GO:0006412">
    <property type="term" value="P:translation"/>
    <property type="evidence" value="ECO:0007669"/>
    <property type="project" value="UniProtKB-UniRule"/>
</dbReference>
<dbReference type="FunFam" id="4.10.830.30:FF:000001">
    <property type="entry name" value="50S ribosomal protein L31"/>
    <property type="match status" value="1"/>
</dbReference>
<dbReference type="Gene3D" id="4.10.830.30">
    <property type="entry name" value="Ribosomal protein L31"/>
    <property type="match status" value="1"/>
</dbReference>
<dbReference type="HAMAP" id="MF_00501">
    <property type="entry name" value="Ribosomal_bL31_1"/>
    <property type="match status" value="1"/>
</dbReference>
<dbReference type="InterPro" id="IPR034704">
    <property type="entry name" value="Ribosomal_bL28/bL31-like_sf"/>
</dbReference>
<dbReference type="InterPro" id="IPR002150">
    <property type="entry name" value="Ribosomal_bL31"/>
</dbReference>
<dbReference type="InterPro" id="IPR027491">
    <property type="entry name" value="Ribosomal_bL31_A"/>
</dbReference>
<dbReference type="InterPro" id="IPR042105">
    <property type="entry name" value="Ribosomal_bL31_sf"/>
</dbReference>
<dbReference type="NCBIfam" id="TIGR00105">
    <property type="entry name" value="L31"/>
    <property type="match status" value="1"/>
</dbReference>
<dbReference type="NCBIfam" id="NF000612">
    <property type="entry name" value="PRK00019.1"/>
    <property type="match status" value="1"/>
</dbReference>
<dbReference type="NCBIfam" id="NF001809">
    <property type="entry name" value="PRK00528.1"/>
    <property type="match status" value="1"/>
</dbReference>
<dbReference type="PANTHER" id="PTHR33280">
    <property type="entry name" value="50S RIBOSOMAL PROTEIN L31, CHLOROPLASTIC"/>
    <property type="match status" value="1"/>
</dbReference>
<dbReference type="PANTHER" id="PTHR33280:SF6">
    <property type="entry name" value="LARGE RIBOSOMAL SUBUNIT PROTEIN BL31A"/>
    <property type="match status" value="1"/>
</dbReference>
<dbReference type="Pfam" id="PF01197">
    <property type="entry name" value="Ribosomal_L31"/>
    <property type="match status" value="1"/>
</dbReference>
<dbReference type="PRINTS" id="PR01249">
    <property type="entry name" value="RIBOSOMALL31"/>
</dbReference>
<dbReference type="SUPFAM" id="SSF143800">
    <property type="entry name" value="L28p-like"/>
    <property type="match status" value="1"/>
</dbReference>
<dbReference type="PROSITE" id="PS01143">
    <property type="entry name" value="RIBOSOMAL_L31"/>
    <property type="match status" value="1"/>
</dbReference>